<proteinExistence type="inferred from homology"/>
<sequence length="62" mass="6923">MARKCVITGRKTKAGNNRSHAMNSTKRTWGANLQKVRILVDGKPKRVYVSARALKSGKVERV</sequence>
<gene>
    <name evidence="1" type="primary">rpmB</name>
    <name type="ordered locus">BPUM_1481</name>
</gene>
<organism>
    <name type="scientific">Bacillus pumilus (strain SAFR-032)</name>
    <dbReference type="NCBI Taxonomy" id="315750"/>
    <lineage>
        <taxon>Bacteria</taxon>
        <taxon>Bacillati</taxon>
        <taxon>Bacillota</taxon>
        <taxon>Bacilli</taxon>
        <taxon>Bacillales</taxon>
        <taxon>Bacillaceae</taxon>
        <taxon>Bacillus</taxon>
    </lineage>
</organism>
<keyword id="KW-0687">Ribonucleoprotein</keyword>
<keyword id="KW-0689">Ribosomal protein</keyword>
<dbReference type="EMBL" id="CP000813">
    <property type="protein sequence ID" value="ABV62164.1"/>
    <property type="molecule type" value="Genomic_DNA"/>
</dbReference>
<dbReference type="RefSeq" id="WP_003212514.1">
    <property type="nucleotide sequence ID" value="NZ_VEIS01000003.1"/>
</dbReference>
<dbReference type="SMR" id="A8FD47"/>
<dbReference type="STRING" id="315750.BPUM_1481"/>
<dbReference type="GeneID" id="66363078"/>
<dbReference type="KEGG" id="bpu:BPUM_1481"/>
<dbReference type="eggNOG" id="COG0227">
    <property type="taxonomic scope" value="Bacteria"/>
</dbReference>
<dbReference type="HOGENOM" id="CLU_064548_7_1_9"/>
<dbReference type="OrthoDB" id="9805609at2"/>
<dbReference type="Proteomes" id="UP000001355">
    <property type="component" value="Chromosome"/>
</dbReference>
<dbReference type="GO" id="GO:1990904">
    <property type="term" value="C:ribonucleoprotein complex"/>
    <property type="evidence" value="ECO:0007669"/>
    <property type="project" value="UniProtKB-KW"/>
</dbReference>
<dbReference type="GO" id="GO:0005840">
    <property type="term" value="C:ribosome"/>
    <property type="evidence" value="ECO:0007669"/>
    <property type="project" value="UniProtKB-KW"/>
</dbReference>
<dbReference type="GO" id="GO:0003735">
    <property type="term" value="F:structural constituent of ribosome"/>
    <property type="evidence" value="ECO:0007669"/>
    <property type="project" value="InterPro"/>
</dbReference>
<dbReference type="GO" id="GO:0006412">
    <property type="term" value="P:translation"/>
    <property type="evidence" value="ECO:0007669"/>
    <property type="project" value="UniProtKB-UniRule"/>
</dbReference>
<dbReference type="Gene3D" id="2.30.170.40">
    <property type="entry name" value="Ribosomal protein L28/L24"/>
    <property type="match status" value="1"/>
</dbReference>
<dbReference type="HAMAP" id="MF_00373">
    <property type="entry name" value="Ribosomal_bL28"/>
    <property type="match status" value="1"/>
</dbReference>
<dbReference type="InterPro" id="IPR050096">
    <property type="entry name" value="Bacterial_rp_bL28"/>
</dbReference>
<dbReference type="InterPro" id="IPR026569">
    <property type="entry name" value="Ribosomal_bL28"/>
</dbReference>
<dbReference type="InterPro" id="IPR034704">
    <property type="entry name" value="Ribosomal_bL28/bL31-like_sf"/>
</dbReference>
<dbReference type="InterPro" id="IPR001383">
    <property type="entry name" value="Ribosomal_bL28_bact-type"/>
</dbReference>
<dbReference type="InterPro" id="IPR037147">
    <property type="entry name" value="Ribosomal_bL28_sf"/>
</dbReference>
<dbReference type="NCBIfam" id="TIGR00009">
    <property type="entry name" value="L28"/>
    <property type="match status" value="1"/>
</dbReference>
<dbReference type="PANTHER" id="PTHR39080">
    <property type="entry name" value="50S RIBOSOMAL PROTEIN L28"/>
    <property type="match status" value="1"/>
</dbReference>
<dbReference type="PANTHER" id="PTHR39080:SF1">
    <property type="entry name" value="LARGE RIBOSOMAL SUBUNIT PROTEIN BL28A"/>
    <property type="match status" value="1"/>
</dbReference>
<dbReference type="Pfam" id="PF00830">
    <property type="entry name" value="Ribosomal_L28"/>
    <property type="match status" value="1"/>
</dbReference>
<dbReference type="SUPFAM" id="SSF143800">
    <property type="entry name" value="L28p-like"/>
    <property type="match status" value="1"/>
</dbReference>
<evidence type="ECO:0000255" key="1">
    <source>
        <dbReference type="HAMAP-Rule" id="MF_00373"/>
    </source>
</evidence>
<evidence type="ECO:0000256" key="2">
    <source>
        <dbReference type="SAM" id="MobiDB-lite"/>
    </source>
</evidence>
<evidence type="ECO:0000305" key="3"/>
<reference key="1">
    <citation type="journal article" date="2007" name="PLoS ONE">
        <title>Paradoxical DNA repair and peroxide resistance gene conservation in Bacillus pumilus SAFR-032.</title>
        <authorList>
            <person name="Gioia J."/>
            <person name="Yerrapragada S."/>
            <person name="Qin X."/>
            <person name="Jiang H."/>
            <person name="Igboeli O.C."/>
            <person name="Muzny D."/>
            <person name="Dugan-Rocha S."/>
            <person name="Ding Y."/>
            <person name="Hawes A."/>
            <person name="Liu W."/>
            <person name="Perez L."/>
            <person name="Kovar C."/>
            <person name="Dinh H."/>
            <person name="Lee S."/>
            <person name="Nazareth L."/>
            <person name="Blyth P."/>
            <person name="Holder M."/>
            <person name="Buhay C."/>
            <person name="Tirumalai M.R."/>
            <person name="Liu Y."/>
            <person name="Dasgupta I."/>
            <person name="Bokhetache L."/>
            <person name="Fujita M."/>
            <person name="Karouia F."/>
            <person name="Eswara Moorthy P."/>
            <person name="Siefert J."/>
            <person name="Uzman A."/>
            <person name="Buzumbo P."/>
            <person name="Verma A."/>
            <person name="Zwiya H."/>
            <person name="McWilliams B.D."/>
            <person name="Olowu A."/>
            <person name="Clinkenbeard K.D."/>
            <person name="Newcombe D."/>
            <person name="Golebiewski L."/>
            <person name="Petrosino J.F."/>
            <person name="Nicholson W.L."/>
            <person name="Fox G.E."/>
            <person name="Venkateswaran K."/>
            <person name="Highlander S.K."/>
            <person name="Weinstock G.M."/>
        </authorList>
    </citation>
    <scope>NUCLEOTIDE SEQUENCE [LARGE SCALE GENOMIC DNA]</scope>
    <source>
        <strain>SAFR-032</strain>
    </source>
</reference>
<feature type="chain" id="PRO_1000059948" description="Large ribosomal subunit protein bL28">
    <location>
        <begin position="1"/>
        <end position="62"/>
    </location>
</feature>
<feature type="region of interest" description="Disordered" evidence="2">
    <location>
        <begin position="1"/>
        <end position="24"/>
    </location>
</feature>
<feature type="compositionally biased region" description="Polar residues" evidence="2">
    <location>
        <begin position="14"/>
        <end position="24"/>
    </location>
</feature>
<accession>A8FD47</accession>
<protein>
    <recommendedName>
        <fullName evidence="1">Large ribosomal subunit protein bL28</fullName>
    </recommendedName>
    <alternativeName>
        <fullName evidence="3">50S ribosomal protein L28</fullName>
    </alternativeName>
</protein>
<name>RL28_BACP2</name>
<comment type="similarity">
    <text evidence="1">Belongs to the bacterial ribosomal protein bL28 family.</text>
</comment>